<reference key="1">
    <citation type="journal article" date="1992" name="Proc. Natl. Acad. Sci. U.S.A.">
        <title>Regions of bacteriophage T4 and RB69 RegA translational repressor proteins that determine RNA-binding specificity.</title>
        <authorList>
            <person name="Jozwik C.E."/>
            <person name="Miller E.S."/>
        </authorList>
    </citation>
    <scope>NUCLEOTIDE SEQUENCE [GENOMIC DNA]</scope>
    <scope>MUTAGENESIS OF ILE-24; ALA-25; HIS-37 AND ASP-72</scope>
</reference>
<gene>
    <name type="primary">regA</name>
</gene>
<evidence type="ECO:0000255" key="1"/>
<evidence type="ECO:0000269" key="2">
    <source>
    </source>
</evidence>
<keyword id="KW-0238">DNA-binding</keyword>
<keyword id="KW-0678">Repressor</keyword>
<keyword id="KW-0810">Translation regulation</keyword>
<comment type="function">
    <text>Controls the translation of a number of proteins (such as regA itself, rIIB and at least 35 others) by binding to their mRNA.</text>
</comment>
<name>REGA_BPR69</name>
<proteinExistence type="evidence at protein level"/>
<accession>Q01751</accession>
<dbReference type="EMBL" id="M86231">
    <property type="protein sequence ID" value="AAA32295.1"/>
    <property type="molecule type" value="Genomic_DNA"/>
</dbReference>
<dbReference type="PIR" id="A45385">
    <property type="entry name" value="A45385"/>
</dbReference>
<dbReference type="SMR" id="Q01751"/>
<dbReference type="GO" id="GO:0003677">
    <property type="term" value="F:DNA binding"/>
    <property type="evidence" value="ECO:0007669"/>
    <property type="project" value="UniProtKB-KW"/>
</dbReference>
<dbReference type="GO" id="GO:0003723">
    <property type="term" value="F:RNA binding"/>
    <property type="evidence" value="ECO:0007669"/>
    <property type="project" value="InterPro"/>
</dbReference>
<dbReference type="GO" id="GO:0006417">
    <property type="term" value="P:regulation of translation"/>
    <property type="evidence" value="ECO:0007669"/>
    <property type="project" value="UniProtKB-KW"/>
</dbReference>
<dbReference type="Gene3D" id="3.30.70.650">
    <property type="entry name" value="Translation repressor RegA"/>
    <property type="match status" value="1"/>
</dbReference>
<dbReference type="InterPro" id="IPR002702">
    <property type="entry name" value="Transl_repress_RegA"/>
</dbReference>
<dbReference type="InterPro" id="IPR036516">
    <property type="entry name" value="Transl_repress_RegA_sf"/>
</dbReference>
<dbReference type="Pfam" id="PF01818">
    <property type="entry name" value="Translat_reg"/>
    <property type="match status" value="1"/>
</dbReference>
<dbReference type="SUPFAM" id="SSF55064">
    <property type="entry name" value="Translational regulator protein regA"/>
    <property type="match status" value="1"/>
</dbReference>
<organism>
    <name type="scientific">Escherichia phage RB69</name>
    <name type="common">Bacteriophage RB69</name>
    <dbReference type="NCBI Taxonomy" id="12353"/>
    <lineage>
        <taxon>Viruses</taxon>
        <taxon>Duplodnaviria</taxon>
        <taxon>Heunggongvirae</taxon>
        <taxon>Uroviricota</taxon>
        <taxon>Caudoviricetes</taxon>
        <taxon>Straboviridae</taxon>
        <taxon>Tevenvirinae</taxon>
        <taxon>Mosigvirus</taxon>
        <taxon>Mosigvirus RB69</taxon>
    </lineage>
</organism>
<organismHost>
    <name type="scientific">Escherichia coli</name>
    <dbReference type="NCBI Taxonomy" id="562"/>
</organismHost>
<feature type="chain" id="PRO_0000164972" description="Translation repressor protein">
    <location>
        <begin position="1"/>
        <end position="122"/>
    </location>
</feature>
<feature type="DNA-binding region" description="H-T-H motif" evidence="1">
    <location>
        <begin position="15"/>
        <end position="37"/>
    </location>
</feature>
<feature type="mutagenesis site" description="Activity altered." evidence="2">
    <original>I</original>
    <variation>T</variation>
    <location>
        <position position="24"/>
    </location>
</feature>
<feature type="mutagenesis site" description="100% activity loss." evidence="2">
    <original>A</original>
    <variation>V</variation>
    <location>
        <position position="25"/>
    </location>
</feature>
<feature type="mutagenesis site" description="100% activity loss." evidence="2">
    <original>H</original>
    <variation>Y</variation>
    <location>
        <position position="37"/>
    </location>
</feature>
<feature type="mutagenesis site" description="100% activity loss." evidence="2">
    <original>D</original>
    <variation>G</variation>
    <location>
        <position position="72"/>
    </location>
</feature>
<protein>
    <recommendedName>
        <fullName>Translation repressor protein</fullName>
    </recommendedName>
</protein>
<sequence length="122" mass="14432">MIEIKLKNPEDFLKVKETLTRMGIANNKDKVLYQSCHILQKQGKYYIVHFKEMLRMDGRQVDIDGEDYQRRDSIAQLLEDWGLIVIEDSAREDLFGLTNNFRVISFKQKDDWTLKAKYTIGN</sequence>